<organism>
    <name type="scientific">Bos taurus</name>
    <name type="common">Bovine</name>
    <dbReference type="NCBI Taxonomy" id="9913"/>
    <lineage>
        <taxon>Eukaryota</taxon>
        <taxon>Metazoa</taxon>
        <taxon>Chordata</taxon>
        <taxon>Craniata</taxon>
        <taxon>Vertebrata</taxon>
        <taxon>Euteleostomi</taxon>
        <taxon>Mammalia</taxon>
        <taxon>Eutheria</taxon>
        <taxon>Laurasiatheria</taxon>
        <taxon>Artiodactyla</taxon>
        <taxon>Ruminantia</taxon>
        <taxon>Pecora</taxon>
        <taxon>Bovidae</taxon>
        <taxon>Bovinae</taxon>
        <taxon>Bos</taxon>
    </lineage>
</organism>
<accession>Q2HJ69</accession>
<dbReference type="EMBL" id="BC113282">
    <property type="protein sequence ID" value="AAI13283.1"/>
    <property type="molecule type" value="mRNA"/>
</dbReference>
<dbReference type="RefSeq" id="NP_001070600.1">
    <property type="nucleotide sequence ID" value="NM_001077132.1"/>
</dbReference>
<dbReference type="RefSeq" id="XP_010815578.1">
    <property type="nucleotide sequence ID" value="XM_010817276.4"/>
</dbReference>
<dbReference type="FunCoup" id="Q2HJ69">
    <property type="interactions" value="2017"/>
</dbReference>
<dbReference type="STRING" id="9913.ENSBTAP00000042633"/>
<dbReference type="PaxDb" id="9913-ENSBTAP00000042633"/>
<dbReference type="GeneID" id="768076"/>
<dbReference type="KEGG" id="bta:768076"/>
<dbReference type="CTD" id="26175"/>
<dbReference type="VEuPathDB" id="HostDB:ENSBTAG00000031885"/>
<dbReference type="eggNOG" id="ENOG502RY2J">
    <property type="taxonomic scope" value="Eukaryota"/>
</dbReference>
<dbReference type="HOGENOM" id="CLU_133007_0_0_1"/>
<dbReference type="InParanoid" id="Q2HJ69"/>
<dbReference type="OMA" id="AYYIFEV"/>
<dbReference type="OrthoDB" id="6273523at2759"/>
<dbReference type="TreeFam" id="TF332722"/>
<dbReference type="Proteomes" id="UP000009136">
    <property type="component" value="Chromosome 21"/>
</dbReference>
<dbReference type="Bgee" id="ENSBTAG00000031885">
    <property type="expression patterns" value="Expressed in oocyte and 105 other cell types or tissues"/>
</dbReference>
<dbReference type="GO" id="GO:0005794">
    <property type="term" value="C:Golgi apparatus"/>
    <property type="evidence" value="ECO:0000250"/>
    <property type="project" value="UniProtKB"/>
</dbReference>
<dbReference type="GO" id="GO:0000139">
    <property type="term" value="C:Golgi membrane"/>
    <property type="evidence" value="ECO:0007669"/>
    <property type="project" value="UniProtKB-SubCell"/>
</dbReference>
<dbReference type="GO" id="GO:0007040">
    <property type="term" value="P:lysosome organization"/>
    <property type="evidence" value="ECO:0000250"/>
    <property type="project" value="UniProtKB"/>
</dbReference>
<dbReference type="GO" id="GO:0060627">
    <property type="term" value="P:regulation of vesicle-mediated transport"/>
    <property type="evidence" value="ECO:0000250"/>
    <property type="project" value="UniProtKB"/>
</dbReference>
<dbReference type="InterPro" id="IPR028024">
    <property type="entry name" value="LYSET"/>
</dbReference>
<dbReference type="PANTHER" id="PTHR31925:SF1">
    <property type="entry name" value="LYSOSOMAL ENZYME TRAFFICKING FACTOR"/>
    <property type="match status" value="1"/>
</dbReference>
<dbReference type="PANTHER" id="PTHR31925">
    <property type="entry name" value="TRANSMEMBRANE PROTEIN 251"/>
    <property type="match status" value="1"/>
</dbReference>
<dbReference type="Pfam" id="PF15190">
    <property type="entry name" value="TMEM251"/>
    <property type="match status" value="1"/>
</dbReference>
<protein>
    <recommendedName>
        <fullName>Lysosomal enzyme trafficking factor</fullName>
    </recommendedName>
    <alternativeName>
        <fullName>Transmembrane protein 251</fullName>
    </alternativeName>
</protein>
<sequence length="163" mass="18880">MPKPPDYSELSDSLTLAVGTGRFSGPLHRAWRMMNFRQRMGWIGVGLYLLASAAAFYYVFEINETYNRLALEHIQQHPEEPLEGTTWTHSLKTRLLSLPFWFWTVVFLIPYLQMFLFLYSCTRADPKTVGYCIIPICLAVICNRHQAFVKASNQISRLQLIDT</sequence>
<keyword id="KW-0333">Golgi apparatus</keyword>
<keyword id="KW-0472">Membrane</keyword>
<keyword id="KW-1185">Reference proteome</keyword>
<keyword id="KW-0812">Transmembrane</keyword>
<keyword id="KW-1133">Transmembrane helix</keyword>
<evidence type="ECO:0000250" key="1">
    <source>
        <dbReference type="UniProtKB" id="Q8N6I4"/>
    </source>
</evidence>
<evidence type="ECO:0000255" key="2"/>
<evidence type="ECO:0000305" key="3"/>
<gene>
    <name type="primary">LYSET</name>
    <name type="synonym">C14orf109</name>
    <name type="synonym">TMEM251</name>
</gene>
<reference key="1">
    <citation type="submission" date="2006-02" db="EMBL/GenBank/DDBJ databases">
        <authorList>
            <consortium name="NIH - Mammalian Gene Collection (MGC) project"/>
        </authorList>
    </citation>
    <scope>NUCLEOTIDE SEQUENCE [LARGE SCALE MRNA]</scope>
    <source>
        <strain>Hereford</strain>
        <tissue>Uterus</tissue>
    </source>
</reference>
<name>LYSET_BOVIN</name>
<proteinExistence type="evidence at transcript level"/>
<comment type="function">
    <text evidence="1">Required for mannose-6-phosphate-dependent trafficking of lysosomal enzymes. LYSET bridges GlcNAc-1-phosphate transferase (GNPTAB), to the membrane-bound transcription factor site-1 protease (MBTPS1), thus allowing proteolytic activation of the GNPTAB. GNPTAB is involved in the regulation of M6P-dependent Golgi-to-lysosome trafficking of lysosomal enzymes. LYSET is thus an essential factor for maturation and delivery of lysosomal hydrolases.</text>
</comment>
<comment type="subunit">
    <text evidence="1">Interacts with GNPTAB; this interaction is important for proper localization of GNPTAB in Golgi stacks. Interacts with MBTPS1.</text>
</comment>
<comment type="subcellular location">
    <subcellularLocation>
        <location evidence="1">Golgi apparatus membrane</location>
        <topology evidence="2">Multi-pass membrane protein</topology>
    </subcellularLocation>
</comment>
<comment type="similarity">
    <text evidence="3">Belongs to the LYSET family.</text>
</comment>
<feature type="chain" id="PRO_0000359884" description="Lysosomal enzyme trafficking factor">
    <location>
        <begin position="1"/>
        <end position="163"/>
    </location>
</feature>
<feature type="transmembrane region" description="Helical" evidence="2">
    <location>
        <begin position="40"/>
        <end position="60"/>
    </location>
</feature>
<feature type="transmembrane region" description="Helical" evidence="2">
    <location>
        <begin position="98"/>
        <end position="118"/>
    </location>
</feature>